<accession>Q95NY5</accession>
<reference evidence="9" key="1">
    <citation type="journal article" date="2002" name="Insect Mol. Biol.">
        <title>The D7 family of salivary proteins in blood sucking diptera.</title>
        <authorList>
            <person name="Valenzuela J.G."/>
            <person name="Charlab R."/>
            <person name="Gonzalez E.C."/>
            <person name="de Miranda-Santos I.K.F."/>
            <person name="Marinotti O."/>
            <person name="Francischetti I.M.B."/>
            <person name="Ribeiro J.M.C."/>
        </authorList>
    </citation>
    <scope>NUCLEOTIDE SEQUENCE [MRNA]</scope>
    <scope>TISSUE SPECIFICITY</scope>
</reference>
<reference evidence="10" key="2">
    <citation type="journal article" date="2002" name="Insect Mol. Biol.">
        <title>Expression of D7 and D7-related proteins in the salivary glands of the human malaria mosquito Anopheles stephensi.</title>
        <authorList>
            <person name="Suwan N."/>
            <person name="Wilkinson M.C."/>
            <person name="Crampton J.M."/>
            <person name="Bates P.A."/>
        </authorList>
    </citation>
    <scope>NUCLEOTIDE SEQUENCE [MRNA]</scope>
    <scope>PROTEIN SEQUENCE OF 19-28</scope>
    <scope>TISSUE SPECIFICITY</scope>
    <scope>INDUCTION (MICROBIAL INFECTION)</scope>
    <source>
        <strain evidence="10">Beech</strain>
        <tissue evidence="10">Salivary gland</tissue>
    </source>
</reference>
<reference evidence="11" key="3">
    <citation type="journal article" date="2014" name="Genome Biol.">
        <title>Genome analysis of a major urban malaria vector mosquito, Anopheles stephensi.</title>
        <authorList>
            <person name="Jiang X."/>
            <person name="Peery A."/>
            <person name="Hall A.B."/>
            <person name="Sharma A."/>
            <person name="Chen X.G."/>
            <person name="Waterhouse R.M."/>
            <person name="Komissarov A."/>
            <person name="Riehle M.M."/>
            <person name="Shouche Y."/>
            <person name="Sharakhova M.V."/>
            <person name="Lawson D."/>
            <person name="Pakpour N."/>
            <person name="Arensburger P."/>
            <person name="Davidson V.L."/>
            <person name="Eiglmeier K."/>
            <person name="Emrich S."/>
            <person name="George P."/>
            <person name="Kennedy R.C."/>
            <person name="Mane S.P."/>
            <person name="Maslen G."/>
            <person name="Oringanje C."/>
            <person name="Qi Y."/>
            <person name="Settlage R."/>
            <person name="Tojo M."/>
            <person name="Tubio J.M."/>
            <person name="Unger M.F."/>
            <person name="Wang B."/>
            <person name="Vernick K.D."/>
            <person name="Ribeiro J.M."/>
            <person name="James A.A."/>
            <person name="Michel K."/>
            <person name="Riehle M.A."/>
            <person name="Luckhart S."/>
            <person name="Sharakhov I.V."/>
            <person name="Tu Z."/>
        </authorList>
    </citation>
    <scope>NUCLEOTIDE SEQUENCE [LARGE SCALE GENOMIC DNA]</scope>
    <source>
        <strain evidence="11">Indian</strain>
    </source>
</reference>
<reference evidence="12 13 14" key="4">
    <citation type="journal article" date="2010" name="PLoS Biol.">
        <title>The function and three-dimensional structure of a thromboxane A2/cysteinyl leukotriene-binding protein from the saliva of a mosquito vector of the malaria parasite.</title>
        <authorList>
            <person name="Alvarenga P.H."/>
            <person name="Francischetti I.M."/>
            <person name="Calvo E."/>
            <person name="Sa-Nunes A."/>
            <person name="Ribeiro J.M."/>
            <person name="Andersen J.F."/>
        </authorList>
    </citation>
    <scope>X-RAY CRYSTALLOGRAPHY (1.43 ANGSTROMS) OF 20-315 IN COMPLEX WITH LEUKOTRIENE C4 AND THROMBOXANE A2 ANALOG U-46619</scope>
    <scope>FUNCTION</scope>
    <scope>DISULFIDE BONDS</scope>
</reference>
<proteinExistence type="evidence at protein level"/>
<comment type="function">
    <text evidence="1 4">Modulates blood feeding of female mosquitoes on vertebrate species by binding and sequestering different mediators involved in the host response (By similarity). Binds leukotriene C4, leukotriene D4, leukotriene E4 and stable analogs of thromboxane A2, U-46619 and carbocyclic TXA2 (PubMed:21152418). Binds weakly prostaglandins: PGD2, PGE2 and PGF2alpha (PubMed:21152418). Does not bind leukotriene B4, biogenic amines, ADP, platelet activating phospholipid derivative PAF and arachidonic acid (PubMed:21152418). Inhibits agonist-induced smooth muscle contraction (PubMed:21152418). Inhibits platelet aggregation induced by low concentrations of collagen in thromboxane A2-dependent manner (PubMed:21152418).</text>
</comment>
<comment type="subcellular location">
    <subcellularLocation>
        <location evidence="1">Secreted</location>
    </subcellularLocation>
</comment>
<comment type="tissue specificity">
    <text evidence="2 3">Distal-lateral and median lobes of female salivary gland (at protein level) (PubMed:12000641). Not detected in male salivary gland (at protein level) (PubMed:12000641). Expressed in female salivary gland (PubMed:11966880, PubMed:12000641). Not detected in female carcass without salivary glands (PubMed:12000641). Expressed in male salivary gland and other tissues (PubMed:12000641).</text>
</comment>
<comment type="induction">
    <text evidence="3">(Microbial infection) Expression is not affected by Plasmodium berghei infection (at protein level).</text>
</comment>
<comment type="similarity">
    <text evidence="7">Belongs to the PBP/GOBP family.</text>
</comment>
<evidence type="ECO:0000250" key="1">
    <source>
        <dbReference type="UniProtKB" id="P18153"/>
    </source>
</evidence>
<evidence type="ECO:0000269" key="2">
    <source>
    </source>
</evidence>
<evidence type="ECO:0000269" key="3">
    <source>
    </source>
</evidence>
<evidence type="ECO:0000269" key="4">
    <source>
    </source>
</evidence>
<evidence type="ECO:0000303" key="5">
    <source>
    </source>
</evidence>
<evidence type="ECO:0000303" key="6">
    <source>
    </source>
</evidence>
<evidence type="ECO:0000305" key="7"/>
<evidence type="ECO:0000305" key="8">
    <source>
    </source>
</evidence>
<evidence type="ECO:0000312" key="9">
    <source>
        <dbReference type="EMBL" id="AAL16043.1"/>
    </source>
</evidence>
<evidence type="ECO:0000312" key="10">
    <source>
        <dbReference type="EMBL" id="CAC70632.1"/>
    </source>
</evidence>
<evidence type="ECO:0000312" key="11">
    <source>
        <dbReference type="Proteomes" id="UP000076408"/>
    </source>
</evidence>
<evidence type="ECO:0007744" key="12">
    <source>
        <dbReference type="PDB" id="3NGV"/>
    </source>
</evidence>
<evidence type="ECO:0007744" key="13">
    <source>
        <dbReference type="PDB" id="3NHI"/>
    </source>
</evidence>
<evidence type="ECO:0007744" key="14">
    <source>
        <dbReference type="PDB" id="3NHT"/>
    </source>
</evidence>
<evidence type="ECO:0007829" key="15">
    <source>
        <dbReference type="PDB" id="3NHI"/>
    </source>
</evidence>
<dbReference type="EMBL" id="AF420266">
    <property type="protein sequence ID" value="AAL16043.1"/>
    <property type="molecule type" value="mRNA"/>
</dbReference>
<dbReference type="EMBL" id="AJ269470">
    <property type="protein sequence ID" value="CAC70632.1"/>
    <property type="molecule type" value="mRNA"/>
</dbReference>
<dbReference type="PDB" id="3NGV">
    <property type="method" value="X-ray"/>
    <property type="resolution" value="1.76 A"/>
    <property type="chains" value="A=20-315"/>
</dbReference>
<dbReference type="PDB" id="3NHI">
    <property type="method" value="X-ray"/>
    <property type="resolution" value="1.43 A"/>
    <property type="chains" value="A=20-315"/>
</dbReference>
<dbReference type="PDB" id="3NHT">
    <property type="method" value="X-ray"/>
    <property type="resolution" value="1.45 A"/>
    <property type="chains" value="A=20-315"/>
</dbReference>
<dbReference type="PDBsum" id="3NGV"/>
<dbReference type="PDBsum" id="3NHI"/>
<dbReference type="PDBsum" id="3NHT"/>
<dbReference type="SMR" id="Q95NY5"/>
<dbReference type="STRING" id="30069.Q95NY5"/>
<dbReference type="EnsemblMetazoa" id="ASTEI02998-RA">
    <property type="protein sequence ID" value="ASTEI02998-PA"/>
    <property type="gene ID" value="ASTEI02998"/>
</dbReference>
<dbReference type="VEuPathDB" id="VectorBase:ASTE008614"/>
<dbReference type="VEuPathDB" id="VectorBase:ASTEI02998"/>
<dbReference type="VEuPathDB" id="VectorBase:ASTEI20_030789"/>
<dbReference type="OMA" id="CYAKCVL"/>
<dbReference type="EvolutionaryTrace" id="Q95NY5"/>
<dbReference type="Proteomes" id="UP000076408">
    <property type="component" value="Unassembled WGS sequence"/>
</dbReference>
<dbReference type="GO" id="GO:0005615">
    <property type="term" value="C:extracellular space"/>
    <property type="evidence" value="ECO:0007669"/>
    <property type="project" value="TreeGrafter"/>
</dbReference>
<dbReference type="GO" id="GO:0005549">
    <property type="term" value="F:odorant binding"/>
    <property type="evidence" value="ECO:0007669"/>
    <property type="project" value="InterPro"/>
</dbReference>
<dbReference type="GO" id="GO:0090729">
    <property type="term" value="F:toxin activity"/>
    <property type="evidence" value="ECO:0007669"/>
    <property type="project" value="UniProtKB-KW"/>
</dbReference>
<dbReference type="GO" id="GO:0007608">
    <property type="term" value="P:sensory perception of smell"/>
    <property type="evidence" value="ECO:0007669"/>
    <property type="project" value="TreeGrafter"/>
</dbReference>
<dbReference type="GO" id="GO:0042311">
    <property type="term" value="P:vasodilation"/>
    <property type="evidence" value="ECO:0007669"/>
    <property type="project" value="UniProtKB-KW"/>
</dbReference>
<dbReference type="CDD" id="cd23992">
    <property type="entry name" value="PBP_GOBP"/>
    <property type="match status" value="1"/>
</dbReference>
<dbReference type="Gene3D" id="1.10.238.20">
    <property type="entry name" value="Pheromone/general odorant binding protein domain"/>
    <property type="match status" value="2"/>
</dbReference>
<dbReference type="InterPro" id="IPR006170">
    <property type="entry name" value="PBP/GOBP"/>
</dbReference>
<dbReference type="InterPro" id="IPR036728">
    <property type="entry name" value="PBP_GOBP_sf"/>
</dbReference>
<dbReference type="PANTHER" id="PTHR11857:SF43">
    <property type="entry name" value="GEO07291P1-RELATED"/>
    <property type="match status" value="1"/>
</dbReference>
<dbReference type="PANTHER" id="PTHR11857">
    <property type="entry name" value="ODORANT BINDING PROTEIN-RELATED"/>
    <property type="match status" value="1"/>
</dbReference>
<dbReference type="Pfam" id="PF01395">
    <property type="entry name" value="PBP_GOBP"/>
    <property type="match status" value="1"/>
</dbReference>
<dbReference type="SUPFAM" id="SSF47565">
    <property type="entry name" value="Insect pheromone/odorant-binding proteins"/>
    <property type="match status" value="2"/>
</dbReference>
<name>D7L1_ANOST</name>
<organism evidence="10">
    <name type="scientific">Anopheles stephensi</name>
    <name type="common">Indo-Pakistan malaria mosquito</name>
    <dbReference type="NCBI Taxonomy" id="30069"/>
    <lineage>
        <taxon>Eukaryota</taxon>
        <taxon>Metazoa</taxon>
        <taxon>Ecdysozoa</taxon>
        <taxon>Arthropoda</taxon>
        <taxon>Hexapoda</taxon>
        <taxon>Insecta</taxon>
        <taxon>Pterygota</taxon>
        <taxon>Neoptera</taxon>
        <taxon>Endopterygota</taxon>
        <taxon>Diptera</taxon>
        <taxon>Nematocera</taxon>
        <taxon>Culicoidea</taxon>
        <taxon>Culicidae</taxon>
        <taxon>Anophelinae</taxon>
        <taxon>Anopheles</taxon>
    </lineage>
</organism>
<feature type="signal peptide" evidence="3">
    <location>
        <begin position="1"/>
        <end position="18"/>
    </location>
</feature>
<feature type="chain" id="PRO_0000460138" description="Long form salivary protein D7L1" evidence="7">
    <location>
        <begin position="19"/>
        <end position="315"/>
    </location>
</feature>
<feature type="binding site" evidence="8 14">
    <location>
        <position position="55"/>
    </location>
    <ligand>
        <name>thromboxane A2</name>
        <dbReference type="ChEBI" id="CHEBI:57445"/>
    </ligand>
</feature>
<feature type="binding site" evidence="4 13">
    <location>
        <position position="58"/>
    </location>
    <ligand>
        <name>leukotriene C4</name>
        <dbReference type="ChEBI" id="CHEBI:57973"/>
    </ligand>
</feature>
<feature type="binding site" evidence="8 14">
    <location>
        <position position="70"/>
    </location>
    <ligand>
        <name>thromboxane A2</name>
        <dbReference type="ChEBI" id="CHEBI:57445"/>
    </ligand>
</feature>
<feature type="binding site" evidence="4 13">
    <location>
        <position position="152"/>
    </location>
    <ligand>
        <name>leukotriene C4</name>
        <dbReference type="ChEBI" id="CHEBI:57973"/>
    </ligand>
</feature>
<feature type="binding site" evidence="4 13">
    <location>
        <position position="170"/>
    </location>
    <ligand>
        <name>leukotriene C4</name>
        <dbReference type="ChEBI" id="CHEBI:57973"/>
    </ligand>
</feature>
<feature type="binding site" evidence="8 14">
    <location>
        <position position="170"/>
    </location>
    <ligand>
        <name>thromboxane A2</name>
        <dbReference type="ChEBI" id="CHEBI:57445"/>
    </ligand>
</feature>
<feature type="disulfide bond" evidence="4 12 13 14">
    <location>
        <begin position="37"/>
        <end position="73"/>
    </location>
</feature>
<feature type="disulfide bond" evidence="4 12 13 14">
    <location>
        <begin position="69"/>
        <end position="128"/>
    </location>
</feature>
<feature type="disulfide bond" evidence="4 12 13 14">
    <location>
        <begin position="178"/>
        <end position="211"/>
    </location>
</feature>
<feature type="disulfide bond" evidence="4 12 13 14">
    <location>
        <begin position="252"/>
        <end position="263"/>
    </location>
</feature>
<feature type="helix" evidence="15">
    <location>
        <begin position="27"/>
        <end position="41"/>
    </location>
</feature>
<feature type="helix" evidence="15">
    <location>
        <begin position="47"/>
        <end position="56"/>
    </location>
</feature>
<feature type="strand" evidence="15">
    <location>
        <begin position="62"/>
        <end position="64"/>
    </location>
</feature>
<feature type="helix" evidence="15">
    <location>
        <begin position="65"/>
        <end position="77"/>
    </location>
</feature>
<feature type="strand" evidence="15">
    <location>
        <begin position="80"/>
        <end position="82"/>
    </location>
</feature>
<feature type="turn" evidence="15">
    <location>
        <begin position="83"/>
        <end position="86"/>
    </location>
</feature>
<feature type="helix" evidence="15">
    <location>
        <begin position="92"/>
        <end position="104"/>
    </location>
</feature>
<feature type="helix" evidence="15">
    <location>
        <begin position="108"/>
        <end position="120"/>
    </location>
</feature>
<feature type="helix" evidence="15">
    <location>
        <begin position="128"/>
        <end position="149"/>
    </location>
</feature>
<feature type="helix" evidence="15">
    <location>
        <begin position="154"/>
        <end position="163"/>
    </location>
</feature>
<feature type="helix" evidence="15">
    <location>
        <begin position="174"/>
        <end position="182"/>
    </location>
</feature>
<feature type="strand" evidence="15">
    <location>
        <begin position="185"/>
        <end position="187"/>
    </location>
</feature>
<feature type="turn" evidence="15">
    <location>
        <begin position="190"/>
        <end position="193"/>
    </location>
</feature>
<feature type="helix" evidence="15">
    <location>
        <begin position="203"/>
        <end position="215"/>
    </location>
</feature>
<feature type="strand" evidence="15">
    <location>
        <begin position="218"/>
        <end position="220"/>
    </location>
</feature>
<feature type="helix" evidence="15">
    <location>
        <begin position="226"/>
        <end position="235"/>
    </location>
</feature>
<feature type="helix" evidence="15">
    <location>
        <begin position="239"/>
        <end position="241"/>
    </location>
</feature>
<feature type="helix" evidence="15">
    <location>
        <begin position="242"/>
        <end position="250"/>
    </location>
</feature>
<feature type="helix" evidence="15">
    <location>
        <begin position="257"/>
        <end position="265"/>
    </location>
</feature>
<feature type="helix" evidence="15">
    <location>
        <begin position="270"/>
        <end position="285"/>
    </location>
</feature>
<feature type="turn" evidence="15">
    <location>
        <begin position="287"/>
        <end position="290"/>
    </location>
</feature>
<feature type="helix" evidence="15">
    <location>
        <begin position="299"/>
        <end position="307"/>
    </location>
</feature>
<feature type="strand" evidence="15">
    <location>
        <begin position="309"/>
        <end position="311"/>
    </location>
</feature>
<gene>
    <name evidence="7" type="primary">D7L1</name>
</gene>
<keyword id="KW-0002">3D-structure</keyword>
<keyword id="KW-0903">Direct protein sequencing</keyword>
<keyword id="KW-1015">Disulfide bond</keyword>
<keyword id="KW-1199">Hemostasis impairing toxin</keyword>
<keyword id="KW-1201">Platelet aggregation inhibiting toxin</keyword>
<keyword id="KW-1185">Reference proteome</keyword>
<keyword id="KW-0964">Secreted</keyword>
<keyword id="KW-0732">Signal</keyword>
<keyword id="KW-0800">Toxin</keyword>
<keyword id="KW-0838">Vasoactive</keyword>
<keyword id="KW-0840">Vasodilator</keyword>
<protein>
    <recommendedName>
        <fullName evidence="7">Long form salivary protein D7L1</fullName>
        <shortName evidence="6">AnSt-D7L1</shortName>
        <shortName evidence="5">AnsD7</shortName>
    </recommendedName>
    <alternativeName>
        <fullName evidence="10">D7 protein</fullName>
    </alternativeName>
    <alternativeName>
        <fullName evidence="9">Long form D7clu2 salivary protein</fullName>
    </alternativeName>
</protein>
<sequence length="315" mass="36420">MIIVAVLLSFLAHLLVQASQPWKALDAEQALYVYKRCYEDHLPSGSDRKTYMTLWNAWRLEPNDAITHCYAKCVLTGLQIYDPQENAFKSDRIPVQYQAYKTITQSKQKEVTEYQKALAAANAKSGSCVDLYNAYLPVHNRFVNLSRQLYHGTVEGAAKIYAAMPEIKQKGESFHAYCEKRAWKGNKQSEWKNGRRYKLTGSPELKDAIDCIFRGLRYMDDTGLKVDEIVRDFNLINKSELEPEVRSVLASCKGSEAYDYYVCLVNSRLKQHFKNAFDFHELRSADYAYLLRGKVYENPEKVKEEMKKLNTTVHF</sequence>